<sequence length="185" mass="21133">MIGLFKVKEKQREESQSNNGRGASTVKKQSAGELRLHKDISELNLPKSCKISFPNGKNDLMNFEVTIKPDEGYYLSGNFVFSFQVSNMYPHEAPKVKCKTKVYHPNIDLEGNVCLNILREDWKPVLNINTVIYGLFHLFTEPNYEDPLNHEAAAVLRDNPKTFEYNVRRAMMGGQVGQTSFPRCM</sequence>
<comment type="function">
    <text evidence="4">Accepts the ubiquitin-like protein NEDD8/RUB1 from the ECR1-AXR1 E1 complex and catalyzes its covalent attachment to other proteins.</text>
</comment>
<comment type="pathway">
    <text>Protein modification; protein neddylation.</text>
</comment>
<comment type="similarity">
    <text evidence="1">Belongs to the ubiquitin-conjugating enzyme family. UBC12 subfamily.</text>
</comment>
<evidence type="ECO:0000255" key="1">
    <source>
        <dbReference type="PROSITE-ProRule" id="PRU00388"/>
    </source>
</evidence>
<evidence type="ECO:0000255" key="2">
    <source>
        <dbReference type="PROSITE-ProRule" id="PRU10133"/>
    </source>
</evidence>
<evidence type="ECO:0000256" key="3">
    <source>
        <dbReference type="SAM" id="MobiDB-lite"/>
    </source>
</evidence>
<evidence type="ECO:0000305" key="4"/>
<reference key="1">
    <citation type="journal article" date="1999" name="Nature">
        <title>Sequence and analysis of chromosome 2 of the plant Arabidopsis thaliana.</title>
        <authorList>
            <person name="Lin X."/>
            <person name="Kaul S."/>
            <person name="Rounsley S.D."/>
            <person name="Shea T.P."/>
            <person name="Benito M.-I."/>
            <person name="Town C.D."/>
            <person name="Fujii C.Y."/>
            <person name="Mason T.M."/>
            <person name="Bowman C.L."/>
            <person name="Barnstead M.E."/>
            <person name="Feldblyum T.V."/>
            <person name="Buell C.R."/>
            <person name="Ketchum K.A."/>
            <person name="Lee J.J."/>
            <person name="Ronning C.M."/>
            <person name="Koo H.L."/>
            <person name="Moffat K.S."/>
            <person name="Cronin L.A."/>
            <person name="Shen M."/>
            <person name="Pai G."/>
            <person name="Van Aken S."/>
            <person name="Umayam L."/>
            <person name="Tallon L.J."/>
            <person name="Gill J.E."/>
            <person name="Adams M.D."/>
            <person name="Carrera A.J."/>
            <person name="Creasy T.H."/>
            <person name="Goodman H.M."/>
            <person name="Somerville C.R."/>
            <person name="Copenhaver G.P."/>
            <person name="Preuss D."/>
            <person name="Nierman W.C."/>
            <person name="White O."/>
            <person name="Eisen J.A."/>
            <person name="Salzberg S.L."/>
            <person name="Fraser C.M."/>
            <person name="Venter J.C."/>
        </authorList>
    </citation>
    <scope>NUCLEOTIDE SEQUENCE [LARGE SCALE GENOMIC DNA]</scope>
    <source>
        <strain>cv. Columbia</strain>
    </source>
</reference>
<reference key="2">
    <citation type="journal article" date="2017" name="Plant J.">
        <title>Araport11: a complete reannotation of the Arabidopsis thaliana reference genome.</title>
        <authorList>
            <person name="Cheng C.Y."/>
            <person name="Krishnakumar V."/>
            <person name="Chan A.P."/>
            <person name="Thibaud-Nissen F."/>
            <person name="Schobel S."/>
            <person name="Town C.D."/>
        </authorList>
    </citation>
    <scope>GENOME REANNOTATION</scope>
    <source>
        <strain>cv. Columbia</strain>
    </source>
</reference>
<reference key="3">
    <citation type="journal article" date="2003" name="Science">
        <title>Empirical analysis of transcriptional activity in the Arabidopsis genome.</title>
        <authorList>
            <person name="Yamada K."/>
            <person name="Lim J."/>
            <person name="Dale J.M."/>
            <person name="Chen H."/>
            <person name="Shinn P."/>
            <person name="Palm C.J."/>
            <person name="Southwick A.M."/>
            <person name="Wu H.C."/>
            <person name="Kim C.J."/>
            <person name="Nguyen M."/>
            <person name="Pham P.K."/>
            <person name="Cheuk R.F."/>
            <person name="Karlin-Newmann G."/>
            <person name="Liu S.X."/>
            <person name="Lam B."/>
            <person name="Sakano H."/>
            <person name="Wu T."/>
            <person name="Yu G."/>
            <person name="Miranda M."/>
            <person name="Quach H.L."/>
            <person name="Tripp M."/>
            <person name="Chang C.H."/>
            <person name="Lee J.M."/>
            <person name="Toriumi M.J."/>
            <person name="Chan M.M."/>
            <person name="Tang C.C."/>
            <person name="Onodera C.S."/>
            <person name="Deng J.M."/>
            <person name="Akiyama K."/>
            <person name="Ansari Y."/>
            <person name="Arakawa T."/>
            <person name="Banh J."/>
            <person name="Banno F."/>
            <person name="Bowser L."/>
            <person name="Brooks S.Y."/>
            <person name="Carninci P."/>
            <person name="Chao Q."/>
            <person name="Choy N."/>
            <person name="Enju A."/>
            <person name="Goldsmith A.D."/>
            <person name="Gurjal M."/>
            <person name="Hansen N.F."/>
            <person name="Hayashizaki Y."/>
            <person name="Johnson-Hopson C."/>
            <person name="Hsuan V.W."/>
            <person name="Iida K."/>
            <person name="Karnes M."/>
            <person name="Khan S."/>
            <person name="Koesema E."/>
            <person name="Ishida J."/>
            <person name="Jiang P.X."/>
            <person name="Jones T."/>
            <person name="Kawai J."/>
            <person name="Kamiya A."/>
            <person name="Meyers C."/>
            <person name="Nakajima M."/>
            <person name="Narusaka M."/>
            <person name="Seki M."/>
            <person name="Sakurai T."/>
            <person name="Satou M."/>
            <person name="Tamse R."/>
            <person name="Vaysberg M."/>
            <person name="Wallender E.K."/>
            <person name="Wong C."/>
            <person name="Yamamura Y."/>
            <person name="Yuan S."/>
            <person name="Shinozaki K."/>
            <person name="Davis R.W."/>
            <person name="Theologis A."/>
            <person name="Ecker J.R."/>
        </authorList>
    </citation>
    <scope>NUCLEOTIDE SEQUENCE [LARGE SCALE MRNA]</scope>
    <source>
        <strain>cv. Columbia</strain>
    </source>
</reference>
<accession>Q9ZU75</accession>
<protein>
    <recommendedName>
        <fullName>Probable NEDD8-conjugating enzyme Ubc12-like</fullName>
        <ecNumber>2.3.2.-</ecNumber>
    </recommendedName>
    <alternativeName>
        <fullName>RUB1 carrier protein 2</fullName>
    </alternativeName>
    <alternativeName>
        <fullName>RUB1-conjugating enzyme 2</fullName>
    </alternativeName>
</protein>
<organism>
    <name type="scientific">Arabidopsis thaliana</name>
    <name type="common">Mouse-ear cress</name>
    <dbReference type="NCBI Taxonomy" id="3702"/>
    <lineage>
        <taxon>Eukaryota</taxon>
        <taxon>Viridiplantae</taxon>
        <taxon>Streptophyta</taxon>
        <taxon>Embryophyta</taxon>
        <taxon>Tracheophyta</taxon>
        <taxon>Spermatophyta</taxon>
        <taxon>Magnoliopsida</taxon>
        <taxon>eudicotyledons</taxon>
        <taxon>Gunneridae</taxon>
        <taxon>Pentapetalae</taxon>
        <taxon>rosids</taxon>
        <taxon>malvids</taxon>
        <taxon>Brassicales</taxon>
        <taxon>Brassicaceae</taxon>
        <taxon>Camelineae</taxon>
        <taxon>Arabidopsis</taxon>
    </lineage>
</organism>
<name>UB12L_ARATH</name>
<proteinExistence type="evidence at transcript level"/>
<gene>
    <name type="primary">RCE2</name>
    <name type="ordered locus">At2g18600</name>
    <name type="ORF">F24H14.5</name>
</gene>
<keyword id="KW-0067">ATP-binding</keyword>
<keyword id="KW-0547">Nucleotide-binding</keyword>
<keyword id="KW-1185">Reference proteome</keyword>
<keyword id="KW-0808">Transferase</keyword>
<keyword id="KW-0833">Ubl conjugation pathway</keyword>
<feature type="chain" id="PRO_0000082495" description="Probable NEDD8-conjugating enzyme Ubc12-like">
    <location>
        <begin position="1"/>
        <end position="185"/>
    </location>
</feature>
<feature type="domain" description="UBC core" evidence="1">
    <location>
        <begin position="31"/>
        <end position="176"/>
    </location>
</feature>
<feature type="region of interest" description="Disordered" evidence="3">
    <location>
        <begin position="8"/>
        <end position="29"/>
    </location>
</feature>
<feature type="compositionally biased region" description="Polar residues" evidence="3">
    <location>
        <begin position="16"/>
        <end position="28"/>
    </location>
</feature>
<feature type="active site" description="Glycyl thioester intermediate" evidence="1 2">
    <location>
        <position position="114"/>
    </location>
</feature>
<dbReference type="EC" id="2.3.2.-"/>
<dbReference type="EMBL" id="AC006135">
    <property type="protein sequence ID" value="AAD12207.1"/>
    <property type="molecule type" value="Genomic_DNA"/>
</dbReference>
<dbReference type="EMBL" id="CP002685">
    <property type="protein sequence ID" value="AEC06784.1"/>
    <property type="molecule type" value="Genomic_DNA"/>
</dbReference>
<dbReference type="EMBL" id="CP002685">
    <property type="protein sequence ID" value="ANM62258.1"/>
    <property type="molecule type" value="Genomic_DNA"/>
</dbReference>
<dbReference type="EMBL" id="BT003913">
    <property type="protein sequence ID" value="AAO41960.1"/>
    <property type="molecule type" value="mRNA"/>
</dbReference>
<dbReference type="EMBL" id="BT005005">
    <property type="protein sequence ID" value="AAO50538.1"/>
    <property type="molecule type" value="mRNA"/>
</dbReference>
<dbReference type="PIR" id="C84566">
    <property type="entry name" value="C84566"/>
</dbReference>
<dbReference type="RefSeq" id="NP_001324430.1">
    <property type="nucleotide sequence ID" value="NM_001335600.1"/>
</dbReference>
<dbReference type="RefSeq" id="NP_565440.1">
    <property type="nucleotide sequence ID" value="NM_127416.4"/>
</dbReference>
<dbReference type="SMR" id="Q9ZU75"/>
<dbReference type="FunCoup" id="Q9ZU75">
    <property type="interactions" value="3611"/>
</dbReference>
<dbReference type="STRING" id="3702.Q9ZU75"/>
<dbReference type="PaxDb" id="3702-AT2G18600.1"/>
<dbReference type="ProteomicsDB" id="243236"/>
<dbReference type="EnsemblPlants" id="AT2G18600.1">
    <property type="protein sequence ID" value="AT2G18600.1"/>
    <property type="gene ID" value="AT2G18600"/>
</dbReference>
<dbReference type="EnsemblPlants" id="AT2G18600.2">
    <property type="protein sequence ID" value="AT2G18600.2"/>
    <property type="gene ID" value="AT2G18600"/>
</dbReference>
<dbReference type="GeneID" id="816375"/>
<dbReference type="Gramene" id="AT2G18600.1">
    <property type="protein sequence ID" value="AT2G18600.1"/>
    <property type="gene ID" value="AT2G18600"/>
</dbReference>
<dbReference type="Gramene" id="AT2G18600.2">
    <property type="protein sequence ID" value="AT2G18600.2"/>
    <property type="gene ID" value="AT2G18600"/>
</dbReference>
<dbReference type="KEGG" id="ath:AT2G18600"/>
<dbReference type="Araport" id="AT2G18600"/>
<dbReference type="TAIR" id="AT2G18600"/>
<dbReference type="eggNOG" id="KOG0420">
    <property type="taxonomic scope" value="Eukaryota"/>
</dbReference>
<dbReference type="HOGENOM" id="CLU_030988_6_0_1"/>
<dbReference type="InParanoid" id="Q9ZU75"/>
<dbReference type="OMA" id="RTCETEF"/>
<dbReference type="OrthoDB" id="10249039at2759"/>
<dbReference type="PhylomeDB" id="Q9ZU75"/>
<dbReference type="UniPathway" id="UPA00885"/>
<dbReference type="PRO" id="PR:Q9ZU75"/>
<dbReference type="Proteomes" id="UP000006548">
    <property type="component" value="Chromosome 2"/>
</dbReference>
<dbReference type="ExpressionAtlas" id="Q9ZU75">
    <property type="expression patterns" value="baseline and differential"/>
</dbReference>
<dbReference type="GO" id="GO:0005524">
    <property type="term" value="F:ATP binding"/>
    <property type="evidence" value="ECO:0007669"/>
    <property type="project" value="UniProtKB-KW"/>
</dbReference>
<dbReference type="GO" id="GO:0016740">
    <property type="term" value="F:transferase activity"/>
    <property type="evidence" value="ECO:0007669"/>
    <property type="project" value="UniProtKB-KW"/>
</dbReference>
<dbReference type="GO" id="GO:0045116">
    <property type="term" value="P:protein neddylation"/>
    <property type="evidence" value="ECO:0007669"/>
    <property type="project" value="UniProtKB-UniPathway"/>
</dbReference>
<dbReference type="CDD" id="cd23794">
    <property type="entry name" value="UBCc_UBE2F_UBE2M"/>
    <property type="match status" value="1"/>
</dbReference>
<dbReference type="FunFam" id="3.10.110.10:FF:000005">
    <property type="entry name" value="NEDD8-conjugating enzyme Ubc12"/>
    <property type="match status" value="1"/>
</dbReference>
<dbReference type="Gene3D" id="3.10.110.10">
    <property type="entry name" value="Ubiquitin Conjugating Enzyme"/>
    <property type="match status" value="1"/>
</dbReference>
<dbReference type="InterPro" id="IPR000608">
    <property type="entry name" value="UBQ-conjugat_E2_core"/>
</dbReference>
<dbReference type="InterPro" id="IPR023313">
    <property type="entry name" value="UBQ-conjugating_AS"/>
</dbReference>
<dbReference type="InterPro" id="IPR016135">
    <property type="entry name" value="UBQ-conjugating_enzyme/RWD"/>
</dbReference>
<dbReference type="PANTHER" id="PTHR24068">
    <property type="entry name" value="UBIQUITIN-CONJUGATING ENZYME E2"/>
    <property type="match status" value="1"/>
</dbReference>
<dbReference type="Pfam" id="PF00179">
    <property type="entry name" value="UQ_con"/>
    <property type="match status" value="1"/>
</dbReference>
<dbReference type="SMART" id="SM00212">
    <property type="entry name" value="UBCc"/>
    <property type="match status" value="1"/>
</dbReference>
<dbReference type="SUPFAM" id="SSF54495">
    <property type="entry name" value="UBC-like"/>
    <property type="match status" value="1"/>
</dbReference>
<dbReference type="PROSITE" id="PS00183">
    <property type="entry name" value="UBC_1"/>
    <property type="match status" value="1"/>
</dbReference>
<dbReference type="PROSITE" id="PS50127">
    <property type="entry name" value="UBC_2"/>
    <property type="match status" value="1"/>
</dbReference>